<organism>
    <name type="scientific">Stenotrophomonas maltophilia (strain R551-3)</name>
    <dbReference type="NCBI Taxonomy" id="391008"/>
    <lineage>
        <taxon>Bacteria</taxon>
        <taxon>Pseudomonadati</taxon>
        <taxon>Pseudomonadota</taxon>
        <taxon>Gammaproteobacteria</taxon>
        <taxon>Lysobacterales</taxon>
        <taxon>Lysobacteraceae</taxon>
        <taxon>Stenotrophomonas</taxon>
        <taxon>Stenotrophomonas maltophilia group</taxon>
    </lineage>
</organism>
<feature type="chain" id="PRO_1000201223" description="3-hydroxydecanoyl-[acyl-carrier-protein] dehydratase">
    <location>
        <begin position="1"/>
        <end position="171"/>
    </location>
</feature>
<feature type="active site" evidence="1">
    <location>
        <position position="70"/>
    </location>
</feature>
<dbReference type="EC" id="4.2.1.59" evidence="1"/>
<dbReference type="EC" id="5.3.3.14" evidence="1"/>
<dbReference type="EMBL" id="CP001111">
    <property type="protein sequence ID" value="ACF50159.1"/>
    <property type="molecule type" value="Genomic_DNA"/>
</dbReference>
<dbReference type="RefSeq" id="WP_004140661.1">
    <property type="nucleotide sequence ID" value="NC_011071.1"/>
</dbReference>
<dbReference type="SMR" id="B4SIF4"/>
<dbReference type="STRING" id="391008.Smal_0454"/>
<dbReference type="KEGG" id="smt:Smal_0454"/>
<dbReference type="eggNOG" id="COG0764">
    <property type="taxonomic scope" value="Bacteria"/>
</dbReference>
<dbReference type="HOGENOM" id="CLU_097925_0_0_6"/>
<dbReference type="OrthoDB" id="9786735at2"/>
<dbReference type="UniPathway" id="UPA00094"/>
<dbReference type="Proteomes" id="UP000001867">
    <property type="component" value="Chromosome"/>
</dbReference>
<dbReference type="GO" id="GO:0005737">
    <property type="term" value="C:cytoplasm"/>
    <property type="evidence" value="ECO:0007669"/>
    <property type="project" value="UniProtKB-SubCell"/>
</dbReference>
<dbReference type="GO" id="GO:0019171">
    <property type="term" value="F:(3R)-hydroxyacyl-[acyl-carrier-protein] dehydratase activity"/>
    <property type="evidence" value="ECO:0007669"/>
    <property type="project" value="UniProtKB-UniRule"/>
</dbReference>
<dbReference type="GO" id="GO:0034017">
    <property type="term" value="F:trans-2-decenoyl-acyl-carrier-protein isomerase activity"/>
    <property type="evidence" value="ECO:0007669"/>
    <property type="project" value="UniProtKB-UniRule"/>
</dbReference>
<dbReference type="GO" id="GO:0006636">
    <property type="term" value="P:unsaturated fatty acid biosynthetic process"/>
    <property type="evidence" value="ECO:0007669"/>
    <property type="project" value="UniProtKB-UniRule"/>
</dbReference>
<dbReference type="CDD" id="cd01287">
    <property type="entry name" value="FabA"/>
    <property type="match status" value="1"/>
</dbReference>
<dbReference type="Gene3D" id="3.10.129.10">
    <property type="entry name" value="Hotdog Thioesterase"/>
    <property type="match status" value="1"/>
</dbReference>
<dbReference type="HAMAP" id="MF_00405">
    <property type="entry name" value="FabA"/>
    <property type="match status" value="1"/>
</dbReference>
<dbReference type="InterPro" id="IPR010083">
    <property type="entry name" value="FabA"/>
</dbReference>
<dbReference type="InterPro" id="IPR013114">
    <property type="entry name" value="FabA_FabZ"/>
</dbReference>
<dbReference type="InterPro" id="IPR029069">
    <property type="entry name" value="HotDog_dom_sf"/>
</dbReference>
<dbReference type="NCBIfam" id="TIGR01749">
    <property type="entry name" value="fabA"/>
    <property type="match status" value="1"/>
</dbReference>
<dbReference type="NCBIfam" id="NF003509">
    <property type="entry name" value="PRK05174.1"/>
    <property type="match status" value="1"/>
</dbReference>
<dbReference type="PANTHER" id="PTHR30272">
    <property type="entry name" value="3-HYDROXYACYL-[ACYL-CARRIER-PROTEIN] DEHYDRATASE"/>
    <property type="match status" value="1"/>
</dbReference>
<dbReference type="PANTHER" id="PTHR30272:SF8">
    <property type="entry name" value="3-HYDROXYDECANOYL-[ACYL-CARRIER-PROTEIN] DEHYDRATASE"/>
    <property type="match status" value="1"/>
</dbReference>
<dbReference type="Pfam" id="PF07977">
    <property type="entry name" value="FabA"/>
    <property type="match status" value="1"/>
</dbReference>
<dbReference type="SUPFAM" id="SSF54637">
    <property type="entry name" value="Thioesterase/thiol ester dehydrase-isomerase"/>
    <property type="match status" value="1"/>
</dbReference>
<accession>B4SIF4</accession>
<comment type="function">
    <text evidence="1">Necessary for the introduction of cis unsaturation into fatty acids. Catalyzes the dehydration of (3R)-3-hydroxydecanoyl-ACP to E-(2)-decenoyl-ACP and then its isomerization to Z-(3)-decenoyl-ACP. Can catalyze the dehydratase reaction for beta-hydroxyacyl-ACPs with saturated chain lengths up to 16:0, being most active on intermediate chain length.</text>
</comment>
<comment type="catalytic activity">
    <reaction evidence="1">
        <text>a (3R)-hydroxyacyl-[ACP] = a (2E)-enoyl-[ACP] + H2O</text>
        <dbReference type="Rhea" id="RHEA:13097"/>
        <dbReference type="Rhea" id="RHEA-COMP:9925"/>
        <dbReference type="Rhea" id="RHEA-COMP:9945"/>
        <dbReference type="ChEBI" id="CHEBI:15377"/>
        <dbReference type="ChEBI" id="CHEBI:78784"/>
        <dbReference type="ChEBI" id="CHEBI:78827"/>
        <dbReference type="EC" id="4.2.1.59"/>
    </reaction>
</comment>
<comment type="catalytic activity">
    <reaction evidence="1">
        <text>(3R)-hydroxydecanoyl-[ACP] = (2E)-decenoyl-[ACP] + H2O</text>
        <dbReference type="Rhea" id="RHEA:41860"/>
        <dbReference type="Rhea" id="RHEA-COMP:9638"/>
        <dbReference type="Rhea" id="RHEA-COMP:9639"/>
        <dbReference type="ChEBI" id="CHEBI:15377"/>
        <dbReference type="ChEBI" id="CHEBI:78466"/>
        <dbReference type="ChEBI" id="CHEBI:78467"/>
    </reaction>
</comment>
<comment type="catalytic activity">
    <reaction evidence="1">
        <text>(2E)-decenoyl-[ACP] = (3Z)-decenoyl-[ACP]</text>
        <dbReference type="Rhea" id="RHEA:23568"/>
        <dbReference type="Rhea" id="RHEA-COMP:9639"/>
        <dbReference type="Rhea" id="RHEA-COMP:9927"/>
        <dbReference type="ChEBI" id="CHEBI:78467"/>
        <dbReference type="ChEBI" id="CHEBI:78798"/>
        <dbReference type="EC" id="5.3.3.14"/>
    </reaction>
</comment>
<comment type="pathway">
    <text evidence="1">Lipid metabolism; fatty acid biosynthesis.</text>
</comment>
<comment type="subunit">
    <text evidence="1">Homodimer.</text>
</comment>
<comment type="subcellular location">
    <subcellularLocation>
        <location evidence="1">Cytoplasm</location>
    </subcellularLocation>
</comment>
<comment type="similarity">
    <text evidence="1">Belongs to the thioester dehydratase family. FabA subfamily.</text>
</comment>
<evidence type="ECO:0000255" key="1">
    <source>
        <dbReference type="HAMAP-Rule" id="MF_00405"/>
    </source>
</evidence>
<sequence length="171" mass="19112">MTRLHAFNREQLLASARGELFGAAAGRLPNDPMLMFDRITEIREDGGPHGKGMVRAELDIRPDLWFFGCHFIGDPVMPGCLGLDAMWQLTGFFLTWLGAPGKGRALGCGEVKFTGQVLPDAKLVRYEIDISRVINRKLVMAQSDARMYVDDREIYSARDLRVGLFTETGSF</sequence>
<keyword id="KW-0963">Cytoplasm</keyword>
<keyword id="KW-0275">Fatty acid biosynthesis</keyword>
<keyword id="KW-0276">Fatty acid metabolism</keyword>
<keyword id="KW-0413">Isomerase</keyword>
<keyword id="KW-0444">Lipid biosynthesis</keyword>
<keyword id="KW-0443">Lipid metabolism</keyword>
<keyword id="KW-0456">Lyase</keyword>
<protein>
    <recommendedName>
        <fullName evidence="1">3-hydroxydecanoyl-[acyl-carrier-protein] dehydratase</fullName>
        <ecNumber evidence="1">4.2.1.59</ecNumber>
    </recommendedName>
    <alternativeName>
        <fullName evidence="1">3-hydroxyacyl-[acyl-carrier-protein] dehydratase FabA</fullName>
    </alternativeName>
    <alternativeName>
        <fullName evidence="1">Beta-hydroxydecanoyl thioester dehydrase</fullName>
    </alternativeName>
    <alternativeName>
        <fullName evidence="1">Trans-2-decenoyl-[acyl-carrier-protein] isomerase</fullName>
        <ecNumber evidence="1">5.3.3.14</ecNumber>
    </alternativeName>
</protein>
<name>FABA_STRM5</name>
<reference key="1">
    <citation type="submission" date="2008-06" db="EMBL/GenBank/DDBJ databases">
        <title>Complete sequence of Stenotrophomonas maltophilia R551-3.</title>
        <authorList>
            <consortium name="US DOE Joint Genome Institute"/>
            <person name="Lucas S."/>
            <person name="Copeland A."/>
            <person name="Lapidus A."/>
            <person name="Glavina del Rio T."/>
            <person name="Dalin E."/>
            <person name="Tice H."/>
            <person name="Pitluck S."/>
            <person name="Chain P."/>
            <person name="Malfatti S."/>
            <person name="Shin M."/>
            <person name="Vergez L."/>
            <person name="Lang D."/>
            <person name="Schmutz J."/>
            <person name="Larimer F."/>
            <person name="Land M."/>
            <person name="Hauser L."/>
            <person name="Kyrpides N."/>
            <person name="Mikhailova N."/>
            <person name="Taghavi S."/>
            <person name="Monchy S."/>
            <person name="Newman L."/>
            <person name="Vangronsveld J."/>
            <person name="van der Lelie D."/>
            <person name="Richardson P."/>
        </authorList>
    </citation>
    <scope>NUCLEOTIDE SEQUENCE [LARGE SCALE GENOMIC DNA]</scope>
    <source>
        <strain>R551-3</strain>
    </source>
</reference>
<gene>
    <name evidence="1" type="primary">fabA</name>
    <name type="ordered locus">Smal_0454</name>
</gene>
<proteinExistence type="inferred from homology"/>